<name>MURB_COXBU</name>
<protein>
    <recommendedName>
        <fullName evidence="1">UDP-N-acetylenolpyruvoylglucosamine reductase</fullName>
        <ecNumber evidence="1">1.3.1.98</ecNumber>
    </recommendedName>
    <alternativeName>
        <fullName evidence="1">UDP-N-acetylmuramate dehydrogenase</fullName>
    </alternativeName>
</protein>
<organism>
    <name type="scientific">Coxiella burnetii (strain RSA 493 / Nine Mile phase I)</name>
    <dbReference type="NCBI Taxonomy" id="227377"/>
    <lineage>
        <taxon>Bacteria</taxon>
        <taxon>Pseudomonadati</taxon>
        <taxon>Pseudomonadota</taxon>
        <taxon>Gammaproteobacteria</taxon>
        <taxon>Legionellales</taxon>
        <taxon>Coxiellaceae</taxon>
        <taxon>Coxiella</taxon>
    </lineage>
</organism>
<sequence length="316" mass="34632">MDKENFTRLRGELFCDHPLARYTSWRVGGKAERFYRPADLFDLQDFLTQLPSDEPLTWLGLGSNVLIRDGGIKGTVILTLNRLKELSVVNSQLVFREKSGTEDFFSGNGKTIIRAEAGVTCAKLAKFCVSQGLEDGAFFAGIPGTVGGALAMNAGAFGGETWRTVIGVETMNHQGEILKRTPDEFKIHYRQVEGLENQFFIAGYFCFNHGDPDKAKTAINALLKKRNLSQPIGKYSCGSVFRNPPGDYAARLIESAGLKGKSIGNAEVSEKHANFILNKGNASAADIEALIHYVAQHVSQIHGIQLVKEVHIIGRS</sequence>
<dbReference type="EC" id="1.3.1.98" evidence="1"/>
<dbReference type="EMBL" id="AE016828">
    <property type="protein sequence ID" value="AAO89701.1"/>
    <property type="molecule type" value="Genomic_DNA"/>
</dbReference>
<dbReference type="RefSeq" id="NP_819187.1">
    <property type="nucleotide sequence ID" value="NC_002971.4"/>
</dbReference>
<dbReference type="RefSeq" id="WP_010957398.1">
    <property type="nucleotide sequence ID" value="NZ_CCYB01000063.1"/>
</dbReference>
<dbReference type="SMR" id="Q83F16"/>
<dbReference type="STRING" id="227377.CBU_0137"/>
<dbReference type="EnsemblBacteria" id="AAO89701">
    <property type="protein sequence ID" value="AAO89701"/>
    <property type="gene ID" value="CBU_0137"/>
</dbReference>
<dbReference type="GeneID" id="1208008"/>
<dbReference type="KEGG" id="cbu:CBU_0137"/>
<dbReference type="PATRIC" id="fig|227377.7.peg.139"/>
<dbReference type="eggNOG" id="COG0812">
    <property type="taxonomic scope" value="Bacteria"/>
</dbReference>
<dbReference type="HOGENOM" id="CLU_035304_1_0_6"/>
<dbReference type="OrthoDB" id="9804753at2"/>
<dbReference type="UniPathway" id="UPA00219"/>
<dbReference type="Proteomes" id="UP000002671">
    <property type="component" value="Chromosome"/>
</dbReference>
<dbReference type="GO" id="GO:0005829">
    <property type="term" value="C:cytosol"/>
    <property type="evidence" value="ECO:0000318"/>
    <property type="project" value="GO_Central"/>
</dbReference>
<dbReference type="GO" id="GO:0071949">
    <property type="term" value="F:FAD binding"/>
    <property type="evidence" value="ECO:0007669"/>
    <property type="project" value="InterPro"/>
</dbReference>
<dbReference type="GO" id="GO:0050660">
    <property type="term" value="F:flavin adenine dinucleotide binding"/>
    <property type="evidence" value="ECO:0000318"/>
    <property type="project" value="GO_Central"/>
</dbReference>
<dbReference type="GO" id="GO:0008762">
    <property type="term" value="F:UDP-N-acetylmuramate dehydrogenase activity"/>
    <property type="evidence" value="ECO:0000318"/>
    <property type="project" value="GO_Central"/>
</dbReference>
<dbReference type="GO" id="GO:0051301">
    <property type="term" value="P:cell division"/>
    <property type="evidence" value="ECO:0007669"/>
    <property type="project" value="UniProtKB-KW"/>
</dbReference>
<dbReference type="GO" id="GO:0071555">
    <property type="term" value="P:cell wall organization"/>
    <property type="evidence" value="ECO:0000318"/>
    <property type="project" value="GO_Central"/>
</dbReference>
<dbReference type="GO" id="GO:0009252">
    <property type="term" value="P:peptidoglycan biosynthetic process"/>
    <property type="evidence" value="ECO:0007669"/>
    <property type="project" value="UniProtKB-UniRule"/>
</dbReference>
<dbReference type="GO" id="GO:0008360">
    <property type="term" value="P:regulation of cell shape"/>
    <property type="evidence" value="ECO:0007669"/>
    <property type="project" value="UniProtKB-KW"/>
</dbReference>
<dbReference type="Gene3D" id="3.30.465.10">
    <property type="match status" value="1"/>
</dbReference>
<dbReference type="Gene3D" id="3.90.78.10">
    <property type="entry name" value="UDP-N-acetylenolpyruvoylglucosamine reductase, C-terminal domain"/>
    <property type="match status" value="1"/>
</dbReference>
<dbReference type="Gene3D" id="3.30.43.10">
    <property type="entry name" value="Uridine Diphospho-n-acetylenolpyruvylglucosamine Reductase, domain 2"/>
    <property type="match status" value="1"/>
</dbReference>
<dbReference type="HAMAP" id="MF_00037">
    <property type="entry name" value="MurB"/>
    <property type="match status" value="1"/>
</dbReference>
<dbReference type="InterPro" id="IPR016166">
    <property type="entry name" value="FAD-bd_PCMH"/>
</dbReference>
<dbReference type="InterPro" id="IPR036318">
    <property type="entry name" value="FAD-bd_PCMH-like_sf"/>
</dbReference>
<dbReference type="InterPro" id="IPR016167">
    <property type="entry name" value="FAD-bd_PCMH_sub1"/>
</dbReference>
<dbReference type="InterPro" id="IPR016169">
    <property type="entry name" value="FAD-bd_PCMH_sub2"/>
</dbReference>
<dbReference type="InterPro" id="IPR003170">
    <property type="entry name" value="MurB"/>
</dbReference>
<dbReference type="InterPro" id="IPR011601">
    <property type="entry name" value="MurB_C"/>
</dbReference>
<dbReference type="InterPro" id="IPR036635">
    <property type="entry name" value="MurB_C_sf"/>
</dbReference>
<dbReference type="InterPro" id="IPR006094">
    <property type="entry name" value="Oxid_FAD_bind_N"/>
</dbReference>
<dbReference type="NCBIfam" id="TIGR00179">
    <property type="entry name" value="murB"/>
    <property type="match status" value="1"/>
</dbReference>
<dbReference type="NCBIfam" id="NF010480">
    <property type="entry name" value="PRK13905.1"/>
    <property type="match status" value="1"/>
</dbReference>
<dbReference type="PANTHER" id="PTHR21071">
    <property type="entry name" value="UDP-N-ACETYLENOLPYRUVOYLGLUCOSAMINE REDUCTASE"/>
    <property type="match status" value="1"/>
</dbReference>
<dbReference type="PANTHER" id="PTHR21071:SF4">
    <property type="entry name" value="UDP-N-ACETYLENOLPYRUVOYLGLUCOSAMINE REDUCTASE"/>
    <property type="match status" value="1"/>
</dbReference>
<dbReference type="Pfam" id="PF01565">
    <property type="entry name" value="FAD_binding_4"/>
    <property type="match status" value="1"/>
</dbReference>
<dbReference type="Pfam" id="PF02873">
    <property type="entry name" value="MurB_C"/>
    <property type="match status" value="1"/>
</dbReference>
<dbReference type="SUPFAM" id="SSF56176">
    <property type="entry name" value="FAD-binding/transporter-associated domain-like"/>
    <property type="match status" value="1"/>
</dbReference>
<dbReference type="SUPFAM" id="SSF56194">
    <property type="entry name" value="Uridine diphospho-N-Acetylenolpyruvylglucosamine reductase, MurB, C-terminal domain"/>
    <property type="match status" value="1"/>
</dbReference>
<dbReference type="PROSITE" id="PS51387">
    <property type="entry name" value="FAD_PCMH"/>
    <property type="match status" value="1"/>
</dbReference>
<gene>
    <name evidence="1" type="primary">murB</name>
    <name type="ordered locus">CBU_0137</name>
</gene>
<evidence type="ECO:0000255" key="1">
    <source>
        <dbReference type="HAMAP-Rule" id="MF_00037"/>
    </source>
</evidence>
<accession>Q83F16</accession>
<reference key="1">
    <citation type="journal article" date="2003" name="Proc. Natl. Acad. Sci. U.S.A.">
        <title>Complete genome sequence of the Q-fever pathogen, Coxiella burnetii.</title>
        <authorList>
            <person name="Seshadri R."/>
            <person name="Paulsen I.T."/>
            <person name="Eisen J.A."/>
            <person name="Read T.D."/>
            <person name="Nelson K.E."/>
            <person name="Nelson W.C."/>
            <person name="Ward N.L."/>
            <person name="Tettelin H."/>
            <person name="Davidsen T.M."/>
            <person name="Beanan M.J."/>
            <person name="DeBoy R.T."/>
            <person name="Daugherty S.C."/>
            <person name="Brinkac L.M."/>
            <person name="Madupu R."/>
            <person name="Dodson R.J."/>
            <person name="Khouri H.M."/>
            <person name="Lee K.H."/>
            <person name="Carty H.A."/>
            <person name="Scanlan D."/>
            <person name="Heinzen R.A."/>
            <person name="Thompson H.A."/>
            <person name="Samuel J.E."/>
            <person name="Fraser C.M."/>
            <person name="Heidelberg J.F."/>
        </authorList>
    </citation>
    <scope>NUCLEOTIDE SEQUENCE [LARGE SCALE GENOMIC DNA]</scope>
    <source>
        <strain>RSA 493 / Nine Mile phase I</strain>
    </source>
</reference>
<comment type="function">
    <text evidence="1">Cell wall formation.</text>
</comment>
<comment type="catalytic activity">
    <reaction evidence="1">
        <text>UDP-N-acetyl-alpha-D-muramate + NADP(+) = UDP-N-acetyl-3-O-(1-carboxyvinyl)-alpha-D-glucosamine + NADPH + H(+)</text>
        <dbReference type="Rhea" id="RHEA:12248"/>
        <dbReference type="ChEBI" id="CHEBI:15378"/>
        <dbReference type="ChEBI" id="CHEBI:57783"/>
        <dbReference type="ChEBI" id="CHEBI:58349"/>
        <dbReference type="ChEBI" id="CHEBI:68483"/>
        <dbReference type="ChEBI" id="CHEBI:70757"/>
        <dbReference type="EC" id="1.3.1.98"/>
    </reaction>
</comment>
<comment type="cofactor">
    <cofactor evidence="1">
        <name>FAD</name>
        <dbReference type="ChEBI" id="CHEBI:57692"/>
    </cofactor>
</comment>
<comment type="pathway">
    <text evidence="1">Cell wall biogenesis; peptidoglycan biosynthesis.</text>
</comment>
<comment type="subcellular location">
    <subcellularLocation>
        <location evidence="1">Cytoplasm</location>
    </subcellularLocation>
</comment>
<comment type="similarity">
    <text evidence="1">Belongs to the MurB family.</text>
</comment>
<proteinExistence type="inferred from homology"/>
<keyword id="KW-0131">Cell cycle</keyword>
<keyword id="KW-0132">Cell division</keyword>
<keyword id="KW-0133">Cell shape</keyword>
<keyword id="KW-0961">Cell wall biogenesis/degradation</keyword>
<keyword id="KW-0963">Cytoplasm</keyword>
<keyword id="KW-0274">FAD</keyword>
<keyword id="KW-0285">Flavoprotein</keyword>
<keyword id="KW-0521">NADP</keyword>
<keyword id="KW-0560">Oxidoreductase</keyword>
<keyword id="KW-0573">Peptidoglycan synthesis</keyword>
<keyword id="KW-1185">Reference proteome</keyword>
<feature type="chain" id="PRO_0000179205" description="UDP-N-acetylenolpyruvoylglucosamine reductase">
    <location>
        <begin position="1"/>
        <end position="316"/>
    </location>
</feature>
<feature type="domain" description="FAD-binding PCMH-type" evidence="1">
    <location>
        <begin position="27"/>
        <end position="225"/>
    </location>
</feature>
<feature type="active site" evidence="1">
    <location>
        <position position="190"/>
    </location>
</feature>
<feature type="active site" description="Proton donor" evidence="1">
    <location>
        <position position="239"/>
    </location>
</feature>
<feature type="active site" evidence="1">
    <location>
        <position position="309"/>
    </location>
</feature>